<sequence>MTDKNTRTEKIQPFSAPKGVPDYAPPRSAAFVAVRDAFITQAHLAGFEHIELPIFEETGLFARGVGESTDVVSKEMYTFADRGERSVTLRPEGTAGVMRAVIEHSLDRGQLPVKLNYAGPFFRYERPQAGRYRQLQQVGVEAIGVDDPALDAEIIALADRSYRSLGLTGFRLELTSLGDSNCRPAYRQKLQDFLLNLPLDEETRRRAEINPLRVLDDKRAEVREMTADAPLMLDHLDDGCRTHFETVTGLLDDMGVPYEINPRMVRGLDYYTKTTFEFIHDGLGAQSGIGGGGRYDGLMAQLGGQDLSGIGYGLGVDRTILALEAEGVTVGQERRVDVYGVPLGQAAKKAMAGIINDLRAAGISADMSYGDRGLKGAMKGADRSGSLYTLVLGENELDNGTVAVKDMRAHDQQDIALSEVVSALRAKLA</sequence>
<protein>
    <recommendedName>
        <fullName evidence="1">Histidine--tRNA ligase</fullName>
        <ecNumber evidence="1">6.1.1.21</ecNumber>
    </recommendedName>
    <alternativeName>
        <fullName evidence="1">Histidyl-tRNA synthetase</fullName>
        <shortName evidence="1">HisRS</shortName>
    </alternativeName>
</protein>
<name>SYH_COREF</name>
<proteinExistence type="inferred from homology"/>
<evidence type="ECO:0000255" key="1">
    <source>
        <dbReference type="HAMAP-Rule" id="MF_00127"/>
    </source>
</evidence>
<accession>Q8FPL5</accession>
<organism>
    <name type="scientific">Corynebacterium efficiens (strain DSM 44549 / YS-314 / AJ 12310 / JCM 11189 / NBRC 100395)</name>
    <dbReference type="NCBI Taxonomy" id="196164"/>
    <lineage>
        <taxon>Bacteria</taxon>
        <taxon>Bacillati</taxon>
        <taxon>Actinomycetota</taxon>
        <taxon>Actinomycetes</taxon>
        <taxon>Mycobacteriales</taxon>
        <taxon>Corynebacteriaceae</taxon>
        <taxon>Corynebacterium</taxon>
    </lineage>
</organism>
<keyword id="KW-0030">Aminoacyl-tRNA synthetase</keyword>
<keyword id="KW-0067">ATP-binding</keyword>
<keyword id="KW-0963">Cytoplasm</keyword>
<keyword id="KW-0436">Ligase</keyword>
<keyword id="KW-0547">Nucleotide-binding</keyword>
<keyword id="KW-0648">Protein biosynthesis</keyword>
<keyword id="KW-1185">Reference proteome</keyword>
<gene>
    <name evidence="1" type="primary">hisS</name>
    <name type="ordered locus">CE1763</name>
</gene>
<dbReference type="EC" id="6.1.1.21" evidence="1"/>
<dbReference type="EMBL" id="BA000035">
    <property type="protein sequence ID" value="BAC18573.1"/>
    <property type="molecule type" value="Genomic_DNA"/>
</dbReference>
<dbReference type="RefSeq" id="WP_006767760.1">
    <property type="nucleotide sequence ID" value="NC_004369.1"/>
</dbReference>
<dbReference type="SMR" id="Q8FPL5"/>
<dbReference type="STRING" id="196164.gene:10742184"/>
<dbReference type="KEGG" id="cef:CE1763"/>
<dbReference type="eggNOG" id="COG0124">
    <property type="taxonomic scope" value="Bacteria"/>
</dbReference>
<dbReference type="HOGENOM" id="CLU_025113_1_1_11"/>
<dbReference type="OrthoDB" id="9800814at2"/>
<dbReference type="Proteomes" id="UP000001409">
    <property type="component" value="Chromosome"/>
</dbReference>
<dbReference type="GO" id="GO:0005737">
    <property type="term" value="C:cytoplasm"/>
    <property type="evidence" value="ECO:0007669"/>
    <property type="project" value="UniProtKB-SubCell"/>
</dbReference>
<dbReference type="GO" id="GO:0005524">
    <property type="term" value="F:ATP binding"/>
    <property type="evidence" value="ECO:0007669"/>
    <property type="project" value="UniProtKB-UniRule"/>
</dbReference>
<dbReference type="GO" id="GO:0004821">
    <property type="term" value="F:histidine-tRNA ligase activity"/>
    <property type="evidence" value="ECO:0007669"/>
    <property type="project" value="UniProtKB-UniRule"/>
</dbReference>
<dbReference type="GO" id="GO:0006427">
    <property type="term" value="P:histidyl-tRNA aminoacylation"/>
    <property type="evidence" value="ECO:0007669"/>
    <property type="project" value="UniProtKB-UniRule"/>
</dbReference>
<dbReference type="CDD" id="cd00773">
    <property type="entry name" value="HisRS-like_core"/>
    <property type="match status" value="1"/>
</dbReference>
<dbReference type="CDD" id="cd00859">
    <property type="entry name" value="HisRS_anticodon"/>
    <property type="match status" value="1"/>
</dbReference>
<dbReference type="Gene3D" id="3.40.50.800">
    <property type="entry name" value="Anticodon-binding domain"/>
    <property type="match status" value="1"/>
</dbReference>
<dbReference type="Gene3D" id="3.30.930.10">
    <property type="entry name" value="Bira Bifunctional Protein, Domain 2"/>
    <property type="match status" value="1"/>
</dbReference>
<dbReference type="HAMAP" id="MF_00127">
    <property type="entry name" value="His_tRNA_synth"/>
    <property type="match status" value="1"/>
</dbReference>
<dbReference type="InterPro" id="IPR006195">
    <property type="entry name" value="aa-tRNA-synth_II"/>
</dbReference>
<dbReference type="InterPro" id="IPR045864">
    <property type="entry name" value="aa-tRNA-synth_II/BPL/LPL"/>
</dbReference>
<dbReference type="InterPro" id="IPR004154">
    <property type="entry name" value="Anticodon-bd"/>
</dbReference>
<dbReference type="InterPro" id="IPR036621">
    <property type="entry name" value="Anticodon-bd_dom_sf"/>
</dbReference>
<dbReference type="InterPro" id="IPR015807">
    <property type="entry name" value="His-tRNA-ligase"/>
</dbReference>
<dbReference type="InterPro" id="IPR041715">
    <property type="entry name" value="HisRS-like_core"/>
</dbReference>
<dbReference type="InterPro" id="IPR004516">
    <property type="entry name" value="HisRS/HisZ"/>
</dbReference>
<dbReference type="InterPro" id="IPR033656">
    <property type="entry name" value="HisRS_anticodon"/>
</dbReference>
<dbReference type="NCBIfam" id="TIGR00442">
    <property type="entry name" value="hisS"/>
    <property type="match status" value="1"/>
</dbReference>
<dbReference type="PANTHER" id="PTHR43707:SF1">
    <property type="entry name" value="HISTIDINE--TRNA LIGASE, MITOCHONDRIAL-RELATED"/>
    <property type="match status" value="1"/>
</dbReference>
<dbReference type="PANTHER" id="PTHR43707">
    <property type="entry name" value="HISTIDYL-TRNA SYNTHETASE"/>
    <property type="match status" value="1"/>
</dbReference>
<dbReference type="Pfam" id="PF03129">
    <property type="entry name" value="HGTP_anticodon"/>
    <property type="match status" value="1"/>
</dbReference>
<dbReference type="Pfam" id="PF13393">
    <property type="entry name" value="tRNA-synt_His"/>
    <property type="match status" value="1"/>
</dbReference>
<dbReference type="PIRSF" id="PIRSF001549">
    <property type="entry name" value="His-tRNA_synth"/>
    <property type="match status" value="1"/>
</dbReference>
<dbReference type="SUPFAM" id="SSF52954">
    <property type="entry name" value="Class II aaRS ABD-related"/>
    <property type="match status" value="1"/>
</dbReference>
<dbReference type="SUPFAM" id="SSF55681">
    <property type="entry name" value="Class II aaRS and biotin synthetases"/>
    <property type="match status" value="1"/>
</dbReference>
<dbReference type="PROSITE" id="PS50862">
    <property type="entry name" value="AA_TRNA_LIGASE_II"/>
    <property type="match status" value="1"/>
</dbReference>
<feature type="chain" id="PRO_0000136146" description="Histidine--tRNA ligase">
    <location>
        <begin position="1"/>
        <end position="429"/>
    </location>
</feature>
<comment type="catalytic activity">
    <reaction evidence="1">
        <text>tRNA(His) + L-histidine + ATP = L-histidyl-tRNA(His) + AMP + diphosphate + H(+)</text>
        <dbReference type="Rhea" id="RHEA:17313"/>
        <dbReference type="Rhea" id="RHEA-COMP:9665"/>
        <dbReference type="Rhea" id="RHEA-COMP:9689"/>
        <dbReference type="ChEBI" id="CHEBI:15378"/>
        <dbReference type="ChEBI" id="CHEBI:30616"/>
        <dbReference type="ChEBI" id="CHEBI:33019"/>
        <dbReference type="ChEBI" id="CHEBI:57595"/>
        <dbReference type="ChEBI" id="CHEBI:78442"/>
        <dbReference type="ChEBI" id="CHEBI:78527"/>
        <dbReference type="ChEBI" id="CHEBI:456215"/>
        <dbReference type="EC" id="6.1.1.21"/>
    </reaction>
</comment>
<comment type="subunit">
    <text evidence="1">Homodimer.</text>
</comment>
<comment type="subcellular location">
    <subcellularLocation>
        <location evidence="1">Cytoplasm</location>
    </subcellularLocation>
</comment>
<comment type="similarity">
    <text evidence="1">Belongs to the class-II aminoacyl-tRNA synthetase family.</text>
</comment>
<reference key="1">
    <citation type="journal article" date="2003" name="Genome Res.">
        <title>Comparative complete genome sequence analysis of the amino acid replacements responsible for the thermostability of Corynebacterium efficiens.</title>
        <authorList>
            <person name="Nishio Y."/>
            <person name="Nakamura Y."/>
            <person name="Kawarabayasi Y."/>
            <person name="Usuda Y."/>
            <person name="Kimura E."/>
            <person name="Sugimoto S."/>
            <person name="Matsui K."/>
            <person name="Yamagishi A."/>
            <person name="Kikuchi H."/>
            <person name="Ikeo K."/>
            <person name="Gojobori T."/>
        </authorList>
    </citation>
    <scope>NUCLEOTIDE SEQUENCE [LARGE SCALE GENOMIC DNA]</scope>
    <source>
        <strain>DSM 44549 / YS-314 / AJ 12310 / JCM 11189 / NBRC 100395</strain>
    </source>
</reference>